<protein>
    <recommendedName>
        <fullName>Hemocyanin, units G and H</fullName>
    </recommendedName>
</protein>
<name>HCYG_SEPOF</name>
<accession>P56826</accession>
<proteinExistence type="evidence at protein level"/>
<keyword id="KW-0186">Copper</keyword>
<keyword id="KW-0903">Direct protein sequencing</keyword>
<keyword id="KW-1015">Disulfide bond</keyword>
<keyword id="KW-0325">Glycoprotein</keyword>
<keyword id="KW-0479">Metal-binding</keyword>
<keyword id="KW-0561">Oxygen transport</keyword>
<keyword id="KW-0677">Repeat</keyword>
<keyword id="KW-0883">Thioether bond</keyword>
<keyword id="KW-0813">Transport</keyword>
<dbReference type="SMR" id="P56826"/>
<dbReference type="GO" id="GO:0046872">
    <property type="term" value="F:metal ion binding"/>
    <property type="evidence" value="ECO:0007669"/>
    <property type="project" value="UniProtKB-KW"/>
</dbReference>
<dbReference type="GO" id="GO:0016491">
    <property type="term" value="F:oxidoreductase activity"/>
    <property type="evidence" value="ECO:0007669"/>
    <property type="project" value="InterPro"/>
</dbReference>
<dbReference type="GO" id="GO:0005344">
    <property type="term" value="F:oxygen carrier activity"/>
    <property type="evidence" value="ECO:0007669"/>
    <property type="project" value="UniProtKB-KW"/>
</dbReference>
<dbReference type="Gene3D" id="1.10.1280.10">
    <property type="entry name" value="Di-copper center containing domain from catechol oxidase"/>
    <property type="match status" value="2"/>
</dbReference>
<dbReference type="Gene3D" id="2.60.310.10">
    <property type="entry name" value="Haemocyanin C-terminal domain"/>
    <property type="match status" value="2"/>
</dbReference>
<dbReference type="InterPro" id="IPR008922">
    <property type="entry name" value="Di-copper_centre_dom_sf"/>
</dbReference>
<dbReference type="InterPro" id="IPR028999">
    <property type="entry name" value="Haemocyanin_beta-sandwich"/>
</dbReference>
<dbReference type="InterPro" id="IPR036848">
    <property type="entry name" value="Haemocyanin_C_sf"/>
</dbReference>
<dbReference type="InterPro" id="IPR050316">
    <property type="entry name" value="Tyrosinase/Hemocyanin"/>
</dbReference>
<dbReference type="InterPro" id="IPR002227">
    <property type="entry name" value="Tyrosinase_Cu-bd"/>
</dbReference>
<dbReference type="PANTHER" id="PTHR11474:SF76">
    <property type="entry name" value="SHKT DOMAIN-CONTAINING PROTEIN"/>
    <property type="match status" value="1"/>
</dbReference>
<dbReference type="PANTHER" id="PTHR11474">
    <property type="entry name" value="TYROSINASE FAMILY MEMBER"/>
    <property type="match status" value="1"/>
</dbReference>
<dbReference type="Pfam" id="PF14830">
    <property type="entry name" value="Haemocyan_bet_s"/>
    <property type="match status" value="2"/>
</dbReference>
<dbReference type="Pfam" id="PF00264">
    <property type="entry name" value="Tyrosinase"/>
    <property type="match status" value="1"/>
</dbReference>
<dbReference type="PRINTS" id="PR00092">
    <property type="entry name" value="TYROSINASE"/>
</dbReference>
<dbReference type="SUPFAM" id="SSF81277">
    <property type="entry name" value="C-terminal domain of mollusc hemocyanin"/>
    <property type="match status" value="2"/>
</dbReference>
<dbReference type="SUPFAM" id="SSF48056">
    <property type="entry name" value="Di-copper centre-containing domain"/>
    <property type="match status" value="2"/>
</dbReference>
<dbReference type="PROSITE" id="PS00497">
    <property type="entry name" value="TYROSINASE_1"/>
    <property type="match status" value="1"/>
</dbReference>
<dbReference type="PROSITE" id="PS00498">
    <property type="entry name" value="TYROSINASE_2"/>
    <property type="match status" value="1"/>
</dbReference>
<organism>
    <name type="scientific">Sepia officinalis</name>
    <name type="common">Common cuttlefish</name>
    <dbReference type="NCBI Taxonomy" id="6610"/>
    <lineage>
        <taxon>Eukaryota</taxon>
        <taxon>Metazoa</taxon>
        <taxon>Spiralia</taxon>
        <taxon>Lophotrochozoa</taxon>
        <taxon>Mollusca</taxon>
        <taxon>Cephalopoda</taxon>
        <taxon>Coleoidea</taxon>
        <taxon>Decapodiformes</taxon>
        <taxon>Sepiida</taxon>
        <taxon>Sepiina</taxon>
        <taxon>Sepiidae</taxon>
        <taxon>Sepia</taxon>
    </lineage>
</organism>
<feature type="chain" id="PRO_0000204310" description="Hemocyanin, units G and H">
    <location>
        <begin position="1" status="less than"/>
        <end position="560"/>
    </location>
</feature>
<feature type="region of interest" description="Unit G">
    <location>
        <begin position="1" status="less than"/>
        <end position="184"/>
    </location>
</feature>
<feature type="region of interest" description="Unit H">
    <location>
        <begin position="185"/>
        <end position="560"/>
    </location>
</feature>
<feature type="binding site" evidence="1">
    <location>
        <position position="230"/>
    </location>
    <ligand>
        <name>Cu cation</name>
        <dbReference type="ChEBI" id="CHEBI:23378"/>
        <label>A</label>
    </ligand>
</feature>
<feature type="binding site" evidence="1">
    <location>
        <position position="249"/>
    </location>
    <ligand>
        <name>Cu cation</name>
        <dbReference type="ChEBI" id="CHEBI:23378"/>
        <label>A</label>
    </ligand>
</feature>
<feature type="binding site" evidence="1">
    <location>
        <position position="258"/>
    </location>
    <ligand>
        <name>Cu cation</name>
        <dbReference type="ChEBI" id="CHEBI:23378"/>
        <label>A</label>
    </ligand>
</feature>
<feature type="binding site" evidence="1">
    <location>
        <position position="358"/>
    </location>
    <ligand>
        <name>Cu cation</name>
        <dbReference type="ChEBI" id="CHEBI:23378"/>
        <label>B</label>
    </ligand>
</feature>
<feature type="binding site" evidence="1">
    <location>
        <position position="362"/>
    </location>
    <ligand>
        <name>Cu cation</name>
        <dbReference type="ChEBI" id="CHEBI:23378"/>
        <label>B</label>
    </ligand>
</feature>
<feature type="binding site" evidence="1">
    <location>
        <position position="389"/>
    </location>
    <ligand>
        <name>Cu cation</name>
        <dbReference type="ChEBI" id="CHEBI:23378"/>
        <label>B</label>
    </ligand>
</feature>
<feature type="glycosylation site" description="N-linked (GlcNAc...) asparagine" evidence="2">
    <location>
        <position position="142"/>
    </location>
</feature>
<feature type="glycosylation site" description="N-linked (GlcNAc...) asparagine" evidence="2">
    <location>
        <position position="240"/>
    </location>
</feature>
<feature type="disulfide bond" evidence="1">
    <location>
        <begin position="1"/>
        <end position="11"/>
    </location>
</feature>
<feature type="disulfide bond" evidence="1">
    <location>
        <begin position="93"/>
        <end position="98"/>
    </location>
</feature>
<feature type="disulfide bond" evidence="1">
    <location>
        <begin position="236"/>
        <end position="246"/>
    </location>
</feature>
<feature type="disulfide bond" evidence="1">
    <location>
        <begin position="348"/>
        <end position="415"/>
    </location>
</feature>
<feature type="disulfide bond" evidence="1">
    <location>
        <begin position="476"/>
        <end position="482"/>
    </location>
</feature>
<feature type="cross-link" description="2'-(S-cysteinyl)-histidine (Cys-His)" evidence="3">
    <location>
        <begin position="12"/>
        <end position="14"/>
    </location>
</feature>
<feature type="cross-link" description="2'-(S-cysteinyl)-histidine (Cys-His)" evidence="3">
    <location>
        <begin position="247"/>
        <end position="249"/>
    </location>
</feature>
<feature type="non-consecutive residues" evidence="4">
    <location>
        <begin position="19"/>
        <end position="20"/>
    </location>
</feature>
<feature type="non-consecutive residues" evidence="4">
    <location>
        <begin position="445"/>
        <end position="446"/>
    </location>
</feature>
<feature type="non-terminal residue">
    <location>
        <position position="1"/>
    </location>
</feature>
<sequence>CPTPDAPQYACCLHGMPTFRESNPNPATRAVSTPNKLFDFKSLGYNYDNLDFHGMDTAHLEAAIKKQKQKDRVFAGFLLHGIKTSADVHLKVCNAADCHEAGVVFVLGARTEMPWHFDRNYKMDITDVLHEMHIPMEALFENDSKIHLEVEIQSVDGAILDSHSLPTPSLIYAPAKGLVSQHIEDHDTETLIRKNVNSLSPSEIKNLRDALVAVQADKSGNGYQKIASYHGMPLSCHYPNGTAFACCQHGMVTFPHWHRLYMKQMEDAMKAKGAKIGIPYWDWTTTFSHLPFLVTEPKNNPFHHGYIDVADTKTTRNPRPQLFDDPEQGDQSFFYRQIAFALEQRDFCDFEIQFEMGHNAIHSWVGGSSPYGMSTLHYTSYDPLFYLHHSNTDRIWAIWQALQKYRGLPYNSANCEINKLKKPMMPFSSDDNPNEVTKAHSTGTKHLNKIQEKDRVFAGFLLRAIGQSADVNFDICRKDGECKFGGTFCVLGGQHEMAWAFDRLFLYDISRTLLQLRLDAHDDFDVKVTIMGIDGKSLPTTLLPPPTILFKPGTGTQLTR</sequence>
<comment type="function">
    <text>Hemocyanins are copper-containing oxygen carriers occurring freely dissolved in the hemolymph of many mollusks and arthropods.</text>
</comment>
<comment type="cofactor">
    <cofactor>
        <name>Cu(2+)</name>
        <dbReference type="ChEBI" id="CHEBI:29036"/>
    </cofactor>
    <text>Binds 2 copper ions per heterodimer.</text>
</comment>
<comment type="subunit">
    <text>Decamers of large identical subunits (390 kDa), each containing 8 globular oxygen-binding functional units.</text>
</comment>
<comment type="similarity">
    <text evidence="4">Belongs to the tyrosinase family. Hemocyanin subfamily.</text>
</comment>
<evidence type="ECO:0000250" key="1"/>
<evidence type="ECO:0000255" key="2"/>
<evidence type="ECO:0000269" key="3">
    <source>
    </source>
</evidence>
<evidence type="ECO:0000305" key="4"/>
<reference key="1">
    <citation type="book" date="1990" name="Invertebrate Dioxygen Carriers">
        <title>Partial sequence determination of Sepia officinalis haemocyanin via cDNA.</title>
        <editorList>
            <person name="Preaux G."/>
            <person name="Lontie R."/>
        </editorList>
        <authorList>
            <person name="Declercq L."/>
            <person name="Witters R."/>
            <person name="Preaux G."/>
        </authorList>
    </citation>
    <scope>NUCLEOTIDE SEQUENCE OF 20-436 AND 446-560</scope>
</reference>
<reference key="2">
    <citation type="book" date="1990" name="Invertebrate Dioxygen Carriers">
        <title>Isolation of functional units g and h from the haemocyanin of Sepia officinalis and partial amino-acid sequence of functional unit h.</title>
        <editorList>
            <person name="Preaux G."/>
            <person name="Lontie R."/>
        </editorList>
        <authorList>
            <person name="Vanderzande M."/>
            <person name="Gielens C."/>
            <person name="Preaux G."/>
        </authorList>
    </citation>
    <scope>PARTIAL PROTEIN SEQUENCE (H SUBUNIT)</scope>
</reference>
<reference key="3">
    <citation type="journal article" date="1997" name="Eur. J. Biochem.">
        <title>Evidence for a cysteine-histidine thioether bridge in functional units of molluscan haemocyanins and location of the disulfide bridges in functional units d and g of the beta-c-haemocyanin of Helix pomatia.</title>
        <authorList>
            <person name="Gielens C."/>
            <person name="de Geest N."/>
            <person name="Xin X.-Q."/>
            <person name="Devreese B."/>
            <person name="van Beeumen J."/>
            <person name="Preaux G."/>
        </authorList>
    </citation>
    <scope>PROTEIN SEQUENCE OF 1-19 AND 230-249</scope>
    <scope>THIOETHER BOND</scope>
</reference>